<evidence type="ECO:0000255" key="1"/>
<evidence type="ECO:0000305" key="2"/>
<organism>
    <name type="scientific">Mus musculus</name>
    <name type="common">Mouse</name>
    <dbReference type="NCBI Taxonomy" id="10090"/>
    <lineage>
        <taxon>Eukaryota</taxon>
        <taxon>Metazoa</taxon>
        <taxon>Chordata</taxon>
        <taxon>Craniata</taxon>
        <taxon>Vertebrata</taxon>
        <taxon>Euteleostomi</taxon>
        <taxon>Mammalia</taxon>
        <taxon>Eutheria</taxon>
        <taxon>Euarchontoglires</taxon>
        <taxon>Glires</taxon>
        <taxon>Rodentia</taxon>
        <taxon>Myomorpha</taxon>
        <taxon>Muroidea</taxon>
        <taxon>Muridae</taxon>
        <taxon>Murinae</taxon>
        <taxon>Mus</taxon>
        <taxon>Mus</taxon>
    </lineage>
</organism>
<dbReference type="EC" id="2.4.1.150"/>
<dbReference type="EMBL" id="U68182">
    <property type="protein sequence ID" value="AAB39621.1"/>
    <property type="molecule type" value="mRNA"/>
</dbReference>
<dbReference type="EMBL" id="AY435149">
    <property type="protein sequence ID" value="AAR95650.1"/>
    <property type="molecule type" value="mRNA"/>
</dbReference>
<dbReference type="EMBL" id="AC133496">
    <property type="status" value="NOT_ANNOTATED_CDS"/>
    <property type="molecule type" value="Genomic_DNA"/>
</dbReference>
<dbReference type="EMBL" id="AC159205">
    <property type="status" value="NOT_ANNOTATED_CDS"/>
    <property type="molecule type" value="Genomic_DNA"/>
</dbReference>
<dbReference type="CCDS" id="CCDS26468.1"/>
<dbReference type="RefSeq" id="NP_032131.2">
    <property type="nucleotide sequence ID" value="NM_008105.3"/>
</dbReference>
<dbReference type="SMR" id="P97402"/>
<dbReference type="BioGRID" id="199870">
    <property type="interactions" value="2"/>
</dbReference>
<dbReference type="FunCoup" id="P97402">
    <property type="interactions" value="485"/>
</dbReference>
<dbReference type="STRING" id="10090.ENSMUSP00000105820"/>
<dbReference type="CAZy" id="GT14">
    <property type="family name" value="Glycosyltransferase Family 14"/>
</dbReference>
<dbReference type="GlyCosmos" id="P97402">
    <property type="glycosylation" value="4 sites, No reported glycans"/>
</dbReference>
<dbReference type="GlyGen" id="P97402">
    <property type="glycosylation" value="4 sites, 1 N-linked glycan (1 site)"/>
</dbReference>
<dbReference type="iPTMnet" id="P97402"/>
<dbReference type="PaxDb" id="10090-ENSMUSP00000070942"/>
<dbReference type="ProteomicsDB" id="268858"/>
<dbReference type="Antibodypedia" id="10005">
    <property type="antibodies" value="240 antibodies from 25 providers"/>
</dbReference>
<dbReference type="DNASU" id="14538"/>
<dbReference type="Ensembl" id="ENSMUST00000069958.15">
    <property type="protein sequence ID" value="ENSMUSP00000070942.8"/>
    <property type="gene ID" value="ENSMUSG00000021360.17"/>
</dbReference>
<dbReference type="GeneID" id="14538"/>
<dbReference type="KEGG" id="mmu:14538"/>
<dbReference type="UCSC" id="uc007qem.2">
    <property type="organism name" value="mouse"/>
</dbReference>
<dbReference type="AGR" id="MGI:1100870"/>
<dbReference type="CTD" id="2651"/>
<dbReference type="MGI" id="MGI:1100870">
    <property type="gene designation" value="Gcnt2"/>
</dbReference>
<dbReference type="VEuPathDB" id="HostDB:ENSMUSG00000021360"/>
<dbReference type="eggNOG" id="KOG0799">
    <property type="taxonomic scope" value="Eukaryota"/>
</dbReference>
<dbReference type="GeneTree" id="ENSGT00940000156849"/>
<dbReference type="InParanoid" id="P97402"/>
<dbReference type="OrthoDB" id="2019572at2759"/>
<dbReference type="UniPathway" id="UPA00378"/>
<dbReference type="BioGRID-ORCS" id="14538">
    <property type="hits" value="5 hits in 79 CRISPR screens"/>
</dbReference>
<dbReference type="PRO" id="PR:P97402"/>
<dbReference type="Proteomes" id="UP000000589">
    <property type="component" value="Chromosome 13"/>
</dbReference>
<dbReference type="RNAct" id="P97402">
    <property type="molecule type" value="protein"/>
</dbReference>
<dbReference type="Bgee" id="ENSMUSG00000021360">
    <property type="expression patterns" value="Expressed in lumbar dorsal root ganglion and 219 other cell types or tissues"/>
</dbReference>
<dbReference type="ExpressionAtlas" id="P97402">
    <property type="expression patterns" value="baseline and differential"/>
</dbReference>
<dbReference type="GO" id="GO:0000139">
    <property type="term" value="C:Golgi membrane"/>
    <property type="evidence" value="ECO:0007669"/>
    <property type="project" value="UniProtKB-SubCell"/>
</dbReference>
<dbReference type="GO" id="GO:0008375">
    <property type="term" value="F:acetylglucosaminyltransferase activity"/>
    <property type="evidence" value="ECO:0000314"/>
    <property type="project" value="MGI"/>
</dbReference>
<dbReference type="GO" id="GO:0008109">
    <property type="term" value="F:N-acetyllactosaminide beta-1,6-N-acetylglucosaminyltransferase activity"/>
    <property type="evidence" value="ECO:0007669"/>
    <property type="project" value="UniProtKB-EC"/>
</dbReference>
<dbReference type="GO" id="GO:0008284">
    <property type="term" value="P:positive regulation of cell population proliferation"/>
    <property type="evidence" value="ECO:0000315"/>
    <property type="project" value="UniProtKB"/>
</dbReference>
<dbReference type="GO" id="GO:0010718">
    <property type="term" value="P:positive regulation of epithelial to mesenchymal transition"/>
    <property type="evidence" value="ECO:0000315"/>
    <property type="project" value="UniProtKB"/>
</dbReference>
<dbReference type="GO" id="GO:0070374">
    <property type="term" value="P:positive regulation of ERK1 and ERK2 cascade"/>
    <property type="evidence" value="ECO:0000315"/>
    <property type="project" value="UniProtKB"/>
</dbReference>
<dbReference type="GO" id="GO:0051897">
    <property type="term" value="P:positive regulation of phosphatidylinositol 3-kinase/protein kinase B signal transduction"/>
    <property type="evidence" value="ECO:0000315"/>
    <property type="project" value="UniProtKB"/>
</dbReference>
<dbReference type="GO" id="GO:0010608">
    <property type="term" value="P:post-transcriptional regulation of gene expression"/>
    <property type="evidence" value="ECO:0000315"/>
    <property type="project" value="UniProtKB"/>
</dbReference>
<dbReference type="GO" id="GO:0006486">
    <property type="term" value="P:protein glycosylation"/>
    <property type="evidence" value="ECO:0007669"/>
    <property type="project" value="UniProtKB-UniPathway"/>
</dbReference>
<dbReference type="GO" id="GO:0007179">
    <property type="term" value="P:transforming growth factor beta receptor signaling pathway"/>
    <property type="evidence" value="ECO:0000315"/>
    <property type="project" value="UniProtKB"/>
</dbReference>
<dbReference type="InterPro" id="IPR003406">
    <property type="entry name" value="Glyco_trans_14"/>
</dbReference>
<dbReference type="PANTHER" id="PTHR19297">
    <property type="entry name" value="GLYCOSYLTRANSFERASE 14 FAMILY MEMBER"/>
    <property type="match status" value="1"/>
</dbReference>
<dbReference type="PANTHER" id="PTHR19297:SF183">
    <property type="entry name" value="N-ACETYLLACTOSAMINIDE BETA-1,6-N-ACETYLGLUCOSAMINYL-TRANSFERASE"/>
    <property type="match status" value="1"/>
</dbReference>
<dbReference type="Pfam" id="PF02485">
    <property type="entry name" value="Branch"/>
    <property type="match status" value="1"/>
</dbReference>
<name>GCNT2_MOUSE</name>
<comment type="function">
    <text>Branching enzyme that converts linear into branched poly-N-acetyllactosaminoglycans. Introduces the blood group I antigen during embryonic development. It is closely associated with the development and maturation of erythroid cells.</text>
</comment>
<comment type="catalytic activity">
    <reaction>
        <text>a beta-D-Gal-(1-&gt;4)-beta-D-GlcNAc-(1-&gt;3)-beta-D-Gal-(1-&gt;4)-beta-D-GlcNAc derivative + UDP-N-acetyl-alpha-D-glucosamine = a beta-D-Gal-(1-&gt;4)-beta-D-GlcNAc-(1-&gt;3)-[beta-D-GlcNAc-(1-&gt;6)]-beta-D-Gal-(1-&gt;4)-N-acetyl-beta-D-glucosaminyl derivative + UDP + H(+)</text>
        <dbReference type="Rhea" id="RHEA:54820"/>
        <dbReference type="ChEBI" id="CHEBI:15378"/>
        <dbReference type="ChEBI" id="CHEBI:57705"/>
        <dbReference type="ChEBI" id="CHEBI:58223"/>
        <dbReference type="ChEBI" id="CHEBI:138371"/>
        <dbReference type="ChEBI" id="CHEBI:138372"/>
        <dbReference type="EC" id="2.4.1.150"/>
    </reaction>
</comment>
<comment type="pathway">
    <text>Protein modification; protein glycosylation.</text>
</comment>
<comment type="subcellular location">
    <subcellularLocation>
        <location>Golgi apparatus membrane</location>
        <topology>Single-pass type II membrane protein</topology>
    </subcellularLocation>
</comment>
<comment type="similarity">
    <text evidence="2">Belongs to the glycosyltransferase 14 family.</text>
</comment>
<comment type="online information" name="Functional Glycomics Gateway - GTase">
    <link uri="http://www.functionalglycomics.org/glycomics/molecule/jsp/glycoEnzyme/viewGlycoEnzyme.jsp?gbpId=gt_mou_563"/>
    <text>Gcnt2 - I branching beta-6-GlcNAcT2, variant 3 (IGnT)</text>
</comment>
<comment type="online information" name="Functional Glycomics Gateway - GTase">
    <link uri="http://www.functionalglycomics.org/glycomics/molecule/jsp/glycoEnzyme/viewGlycoEnzyme.jsp?gbpId=gt_mou_587"/>
    <text>Gcnt2 - I branching beta-6-GlcNAcT2, variant 1 (IGnT)</text>
</comment>
<protein>
    <recommendedName>
        <fullName>N-acetyllactosaminide beta-1,6-N-acetylglucosaminyl-transferase</fullName>
        <shortName>N-acetylglucosaminyltransferase</shortName>
        <ecNumber>2.4.1.150</ecNumber>
    </recommendedName>
    <alternativeName>
        <fullName>I-branching enzyme</fullName>
    </alternativeName>
    <alternativeName>
        <fullName>IGNT</fullName>
    </alternativeName>
    <alternativeName>
        <fullName>Large I antigen-forming beta-1,6-N-acetylglucosaminyltransferase</fullName>
    </alternativeName>
</protein>
<accession>P97402</accession>
<accession>Q6T5E3</accession>
<reference key="1">
    <citation type="journal article" date="1997" name="Glycobiology">
        <title>Expression of the large I antigen forming beta-1,6-N-acetylglucosaminyltransferase in various tissues of adult mice.</title>
        <authorList>
            <person name="Magnet A.D."/>
            <person name="Fukuda M."/>
        </authorList>
    </citation>
    <scope>NUCLEOTIDE SEQUENCE [MRNA]</scope>
</reference>
<reference key="2">
    <citation type="journal article" date="2004" name="Genome Res.">
        <title>Multiple variable first exons: a mechanism for cell- and tissue-specific gene regulation.</title>
        <authorList>
            <person name="Zhang T."/>
            <person name="Haws P."/>
            <person name="Wu Q."/>
        </authorList>
    </citation>
    <scope>NUCLEOTIDE SEQUENCE [MRNA]</scope>
    <source>
        <strain>C57BL/6J</strain>
    </source>
</reference>
<reference key="3">
    <citation type="journal article" date="2009" name="PLoS Biol.">
        <title>Lineage-specific biology revealed by a finished genome assembly of the mouse.</title>
        <authorList>
            <person name="Church D.M."/>
            <person name="Goodstadt L."/>
            <person name="Hillier L.W."/>
            <person name="Zody M.C."/>
            <person name="Goldstein S."/>
            <person name="She X."/>
            <person name="Bult C.J."/>
            <person name="Agarwala R."/>
            <person name="Cherry J.L."/>
            <person name="DiCuccio M."/>
            <person name="Hlavina W."/>
            <person name="Kapustin Y."/>
            <person name="Meric P."/>
            <person name="Maglott D."/>
            <person name="Birtle Z."/>
            <person name="Marques A.C."/>
            <person name="Graves T."/>
            <person name="Zhou S."/>
            <person name="Teague B."/>
            <person name="Potamousis K."/>
            <person name="Churas C."/>
            <person name="Place M."/>
            <person name="Herschleb J."/>
            <person name="Runnheim R."/>
            <person name="Forrest D."/>
            <person name="Amos-Landgraf J."/>
            <person name="Schwartz D.C."/>
            <person name="Cheng Z."/>
            <person name="Lindblad-Toh K."/>
            <person name="Eichler E.E."/>
            <person name="Ponting C.P."/>
        </authorList>
    </citation>
    <scope>NUCLEOTIDE SEQUENCE [LARGE SCALE GENOMIC DNA]</scope>
    <source>
        <strain>C57BL/6J</strain>
    </source>
</reference>
<feature type="chain" id="PRO_0000191398" description="N-acetyllactosaminide beta-1,6-N-acetylglucosaminyl-transferase">
    <location>
        <begin position="1"/>
        <end position="401"/>
    </location>
</feature>
<feature type="topological domain" description="Cytoplasmic" evidence="1">
    <location>
        <begin position="1"/>
        <end position="7"/>
    </location>
</feature>
<feature type="transmembrane region" description="Helical; Signal-anchor for type II membrane protein" evidence="1">
    <location>
        <begin position="8"/>
        <end position="28"/>
    </location>
</feature>
<feature type="topological domain" description="Lumenal" evidence="1">
    <location>
        <begin position="29"/>
        <end position="401"/>
    </location>
</feature>
<feature type="glycosylation site" description="N-linked (GlcNAc...) asparagine" evidence="1">
    <location>
        <position position="37"/>
    </location>
</feature>
<feature type="glycosylation site" description="N-linked (GlcNAc...) asparagine" evidence="1">
    <location>
        <position position="255"/>
    </location>
</feature>
<feature type="glycosylation site" description="N-linked (GlcNAc...) asparagine" evidence="1">
    <location>
        <position position="315"/>
    </location>
</feature>
<feature type="glycosylation site" description="N-linked (GlcNAc...) asparagine" evidence="1">
    <location>
        <position position="389"/>
    </location>
</feature>
<feature type="sequence conflict" description="In Ref. 1; AAB39621." evidence="2" ref="1">
    <original>P</original>
    <variation>L</variation>
    <location>
        <position position="3"/>
    </location>
</feature>
<feature type="sequence conflict" description="In Ref. 1; AAB39621." evidence="2" ref="1">
    <original>IVFIVL</original>
    <variation>MVCVVS</variation>
    <location>
        <begin position="17"/>
        <end position="22"/>
    </location>
</feature>
<feature type="sequence conflict" description="In Ref. 1; AAB39621." evidence="2" ref="1">
    <original>MLA</original>
    <variation>RLS</variation>
    <location>
        <begin position="43"/>
        <end position="45"/>
    </location>
</feature>
<feature type="sequence conflict" description="In Ref. 1; AAB39621." evidence="2" ref="1">
    <original>V</original>
    <variation>G</variation>
    <location>
        <position position="91"/>
    </location>
</feature>
<feature type="sequence conflict" description="In Ref. 1; AAB39621." evidence="2" ref="1">
    <original>A</original>
    <variation>V</variation>
    <location>
        <position position="148"/>
    </location>
</feature>
<feature type="sequence conflict" description="In Ref. 1; AAB39621." evidence="2" ref="1">
    <location>
        <position position="312"/>
    </location>
</feature>
<feature type="sequence conflict" description="In Ref. 1; AAB39621." evidence="2" ref="1">
    <original>H</original>
    <variation>Q</variation>
    <location>
        <position position="338"/>
    </location>
</feature>
<feature type="sequence conflict" description="In Ref. 1; AAB39621." evidence="2" ref="1">
    <original>I</original>
    <variation>S</variation>
    <location>
        <position position="393"/>
    </location>
</feature>
<proteinExistence type="evidence at transcript level"/>
<keyword id="KW-0325">Glycoprotein</keyword>
<keyword id="KW-0328">Glycosyltransferase</keyword>
<keyword id="KW-0333">Golgi apparatus</keyword>
<keyword id="KW-0472">Membrane</keyword>
<keyword id="KW-1185">Reference proteome</keyword>
<keyword id="KW-0735">Signal-anchor</keyword>
<keyword id="KW-0808">Transferase</keyword>
<keyword id="KW-0812">Transmembrane</keyword>
<keyword id="KW-1133">Transmembrane helix</keyword>
<gene>
    <name type="primary">Gcnt2</name>
</gene>
<sequence length="401" mass="45697">MPPSVRYFFIVSVTTVIVFIVLYVLSFGGDQSYQKLNISDSVMLAQVCSSFIDGKSRFLWRNKLMIHEKPSCTEYVTQSHYITAPLSQEEVDFPLAYVMVIHHNFDTFARLFRAIFMPQNIYCVHVDEKATAEFKGAVEQLVSCFPNAFLASKMEPVVYGGISRLQADLNCIKDLSTSEVPWKYAINTCGQDFPLKTNKEIVQYLKGLKGKNLTPGVLPPAHAIGRTRYVHREHLSKELSYVIRTTALKPPPPHNLTIYFGSAYVALSREFANFVLRDPRAVDLLHWSKDTFSPDEHFWVTLNRIPGVPGSMPPNASWTGNLRAVKWMDMEAKHGGCHGHYVHGICIYGNGDLQWLINSQSLFANKFELNTYPLTVECLELRLRERTLNQSEIAIQPSWYF</sequence>